<gene>
    <name evidence="1" type="primary">mraY</name>
    <name type="ordered locus">SPs0462</name>
</gene>
<protein>
    <recommendedName>
        <fullName evidence="1">Phospho-N-acetylmuramoyl-pentapeptide-transferase</fullName>
        <ecNumber evidence="1">2.7.8.13</ecNumber>
    </recommendedName>
    <alternativeName>
        <fullName evidence="1">UDP-MurNAc-pentapeptide phosphotransferase</fullName>
    </alternativeName>
</protein>
<comment type="function">
    <text evidence="1">Catalyzes the initial step of the lipid cycle reactions in the biosynthesis of the cell wall peptidoglycan: transfers peptidoglycan precursor phospho-MurNAc-pentapeptide from UDP-MurNAc-pentapeptide onto the lipid carrier undecaprenyl phosphate, yielding undecaprenyl-pyrophosphoryl-MurNAc-pentapeptide, known as lipid I.</text>
</comment>
<comment type="catalytic activity">
    <reaction evidence="1">
        <text>UDP-N-acetyl-alpha-D-muramoyl-L-alanyl-gamma-D-glutamyl-L-lysyl-D-alanyl-D-alanine + di-trans,octa-cis-undecaprenyl phosphate = Mur2Ac(oyl-L-Ala-gamma-D-Glu-L-Lys-D-Ala-D-Ala)-di-trans,octa-cis-undecaprenyl diphosphate + UMP</text>
        <dbReference type="Rhea" id="RHEA:21920"/>
        <dbReference type="ChEBI" id="CHEBI:57865"/>
        <dbReference type="ChEBI" id="CHEBI:60032"/>
        <dbReference type="ChEBI" id="CHEBI:60392"/>
        <dbReference type="ChEBI" id="CHEBI:70758"/>
        <dbReference type="EC" id="2.7.8.13"/>
    </reaction>
</comment>
<comment type="cofactor">
    <cofactor evidence="1">
        <name>Mg(2+)</name>
        <dbReference type="ChEBI" id="CHEBI:18420"/>
    </cofactor>
</comment>
<comment type="pathway">
    <text evidence="1">Cell wall biogenesis; peptidoglycan biosynthesis.</text>
</comment>
<comment type="subcellular location">
    <subcellularLocation>
        <location evidence="1">Cell membrane</location>
        <topology evidence="1">Multi-pass membrane protein</topology>
    </subcellularLocation>
</comment>
<comment type="similarity">
    <text evidence="1">Belongs to the glycosyltransferase 4 family. MraY subfamily.</text>
</comment>
<evidence type="ECO:0000255" key="1">
    <source>
        <dbReference type="HAMAP-Rule" id="MF_00038"/>
    </source>
</evidence>
<keyword id="KW-0131">Cell cycle</keyword>
<keyword id="KW-0132">Cell division</keyword>
<keyword id="KW-1003">Cell membrane</keyword>
<keyword id="KW-0133">Cell shape</keyword>
<keyword id="KW-0961">Cell wall biogenesis/degradation</keyword>
<keyword id="KW-0460">Magnesium</keyword>
<keyword id="KW-0472">Membrane</keyword>
<keyword id="KW-0479">Metal-binding</keyword>
<keyword id="KW-0573">Peptidoglycan synthesis</keyword>
<keyword id="KW-0808">Transferase</keyword>
<keyword id="KW-0812">Transmembrane</keyword>
<keyword id="KW-1133">Transmembrane helix</keyword>
<feature type="chain" id="PRO_0000411359" description="Phospho-N-acetylmuramoyl-pentapeptide-transferase">
    <location>
        <begin position="1"/>
        <end position="336"/>
    </location>
</feature>
<feature type="transmembrane region" description="Helical" evidence="1">
    <location>
        <begin position="3"/>
        <end position="23"/>
    </location>
</feature>
<feature type="transmembrane region" description="Helical" evidence="1">
    <location>
        <begin position="53"/>
        <end position="73"/>
    </location>
</feature>
<feature type="transmembrane region" description="Helical" evidence="1">
    <location>
        <begin position="78"/>
        <end position="98"/>
    </location>
</feature>
<feature type="transmembrane region" description="Helical" evidence="1">
    <location>
        <begin position="118"/>
        <end position="138"/>
    </location>
</feature>
<feature type="transmembrane region" description="Helical" evidence="1">
    <location>
        <begin position="143"/>
        <end position="163"/>
    </location>
</feature>
<feature type="transmembrane region" description="Helical" evidence="1">
    <location>
        <begin position="174"/>
        <end position="194"/>
    </location>
</feature>
<feature type="transmembrane region" description="Helical" evidence="1">
    <location>
        <begin position="200"/>
        <end position="220"/>
    </location>
</feature>
<feature type="transmembrane region" description="Helical" evidence="1">
    <location>
        <begin position="226"/>
        <end position="246"/>
    </location>
</feature>
<feature type="transmembrane region" description="Helical" evidence="1">
    <location>
        <begin position="251"/>
        <end position="271"/>
    </location>
</feature>
<feature type="transmembrane region" description="Helical" evidence="1">
    <location>
        <begin position="316"/>
        <end position="336"/>
    </location>
</feature>
<accession>P0DB43</accession>
<accession>Q8K6C7</accession>
<sequence length="336" mass="36886">MFLTLIAAIISFMVSAFTMPYFIKFYQLKKIGGQQMHEDVKQHLAKAGTPTMGGTVFLLVATAVSLLVSLFSIKNTQSLALISGILSIVVIYGIIGFLDDFLKIFKQINEGLTAKQKLALQLAGGLMFYFLHVSPSGISSINVFGYQLSLGIFYLFFVLFWVVGFSNAVNLTDGIDGLASISVVISLVTYGVIAYVQSQFDVLLLIGAMIGALLGFFCFNHKPAKVFMGDVGSLALGAMLAAISIALRQEWTLLIIGIVYVLETSSVMLQVSYFKYTKKKYGEGRRIFRMTPFHHHLELGGLSGKGKKWSEWQVDAFLWGVGSLASLLVLAILYVF</sequence>
<proteinExistence type="inferred from homology"/>
<dbReference type="EC" id="2.7.8.13" evidence="1"/>
<dbReference type="EMBL" id="BA000034">
    <property type="protein sequence ID" value="BAC63557.1"/>
    <property type="molecule type" value="Genomic_DNA"/>
</dbReference>
<dbReference type="RefSeq" id="WP_011054851.1">
    <property type="nucleotide sequence ID" value="NC_004606.1"/>
</dbReference>
<dbReference type="SMR" id="P0DB43"/>
<dbReference type="KEGG" id="sps:SPs0462"/>
<dbReference type="HOGENOM" id="CLU_023982_0_1_9"/>
<dbReference type="UniPathway" id="UPA00219"/>
<dbReference type="GO" id="GO:0005886">
    <property type="term" value="C:plasma membrane"/>
    <property type="evidence" value="ECO:0007669"/>
    <property type="project" value="UniProtKB-SubCell"/>
</dbReference>
<dbReference type="GO" id="GO:0046872">
    <property type="term" value="F:metal ion binding"/>
    <property type="evidence" value="ECO:0007669"/>
    <property type="project" value="UniProtKB-KW"/>
</dbReference>
<dbReference type="GO" id="GO:0008963">
    <property type="term" value="F:phospho-N-acetylmuramoyl-pentapeptide-transferase activity"/>
    <property type="evidence" value="ECO:0007669"/>
    <property type="project" value="UniProtKB-UniRule"/>
</dbReference>
<dbReference type="GO" id="GO:0051301">
    <property type="term" value="P:cell division"/>
    <property type="evidence" value="ECO:0007669"/>
    <property type="project" value="UniProtKB-KW"/>
</dbReference>
<dbReference type="GO" id="GO:0071555">
    <property type="term" value="P:cell wall organization"/>
    <property type="evidence" value="ECO:0007669"/>
    <property type="project" value="UniProtKB-KW"/>
</dbReference>
<dbReference type="GO" id="GO:0009252">
    <property type="term" value="P:peptidoglycan biosynthetic process"/>
    <property type="evidence" value="ECO:0007669"/>
    <property type="project" value="UniProtKB-UniRule"/>
</dbReference>
<dbReference type="GO" id="GO:0008360">
    <property type="term" value="P:regulation of cell shape"/>
    <property type="evidence" value="ECO:0007669"/>
    <property type="project" value="UniProtKB-KW"/>
</dbReference>
<dbReference type="CDD" id="cd06852">
    <property type="entry name" value="GT_MraY"/>
    <property type="match status" value="1"/>
</dbReference>
<dbReference type="HAMAP" id="MF_00038">
    <property type="entry name" value="MraY"/>
    <property type="match status" value="1"/>
</dbReference>
<dbReference type="InterPro" id="IPR000715">
    <property type="entry name" value="Glycosyl_transferase_4"/>
</dbReference>
<dbReference type="InterPro" id="IPR003524">
    <property type="entry name" value="PNAcMuramoyl-5peptid_Trfase"/>
</dbReference>
<dbReference type="InterPro" id="IPR018480">
    <property type="entry name" value="PNAcMuramoyl-5peptid_Trfase_CS"/>
</dbReference>
<dbReference type="NCBIfam" id="TIGR00445">
    <property type="entry name" value="mraY"/>
    <property type="match status" value="1"/>
</dbReference>
<dbReference type="PANTHER" id="PTHR22926">
    <property type="entry name" value="PHOSPHO-N-ACETYLMURAMOYL-PENTAPEPTIDE-TRANSFERASE"/>
    <property type="match status" value="1"/>
</dbReference>
<dbReference type="PANTHER" id="PTHR22926:SF5">
    <property type="entry name" value="PHOSPHO-N-ACETYLMURAMOYL-PENTAPEPTIDE-TRANSFERASE HOMOLOG"/>
    <property type="match status" value="1"/>
</dbReference>
<dbReference type="Pfam" id="PF00953">
    <property type="entry name" value="Glycos_transf_4"/>
    <property type="match status" value="1"/>
</dbReference>
<dbReference type="Pfam" id="PF10555">
    <property type="entry name" value="MraY_sig1"/>
    <property type="match status" value="1"/>
</dbReference>
<dbReference type="PROSITE" id="PS01348">
    <property type="entry name" value="MRAY_2"/>
    <property type="match status" value="1"/>
</dbReference>
<name>MRAY_STRPQ</name>
<reference key="1">
    <citation type="journal article" date="2003" name="Genome Res.">
        <title>Genome sequence of an M3 strain of Streptococcus pyogenes reveals a large-scale genomic rearrangement in invasive strains and new insights into phage evolution.</title>
        <authorList>
            <person name="Nakagawa I."/>
            <person name="Kurokawa K."/>
            <person name="Yamashita A."/>
            <person name="Nakata M."/>
            <person name="Tomiyasu Y."/>
            <person name="Okahashi N."/>
            <person name="Kawabata S."/>
            <person name="Yamazaki K."/>
            <person name="Shiba T."/>
            <person name="Yasunaga T."/>
            <person name="Hayashi H."/>
            <person name="Hattori M."/>
            <person name="Hamada S."/>
        </authorList>
    </citation>
    <scope>NUCLEOTIDE SEQUENCE [LARGE SCALE GENOMIC DNA]</scope>
    <source>
        <strain>SSI-1</strain>
    </source>
</reference>
<organism>
    <name type="scientific">Streptococcus pyogenes serotype M3 (strain SSI-1)</name>
    <dbReference type="NCBI Taxonomy" id="193567"/>
    <lineage>
        <taxon>Bacteria</taxon>
        <taxon>Bacillati</taxon>
        <taxon>Bacillota</taxon>
        <taxon>Bacilli</taxon>
        <taxon>Lactobacillales</taxon>
        <taxon>Streptococcaceae</taxon>
        <taxon>Streptococcus</taxon>
    </lineage>
</organism>